<proteinExistence type="inferred from homology"/>
<gene>
    <name evidence="1" type="primary">frr</name>
    <name type="ordered locus">BUAP5A_229</name>
</gene>
<name>RRF_BUCA5</name>
<feature type="chain" id="PRO_1000194906" description="Ribosome-recycling factor">
    <location>
        <begin position="1"/>
        <end position="185"/>
    </location>
</feature>
<organism>
    <name type="scientific">Buchnera aphidicola subsp. Acyrthosiphon pisum (strain 5A)</name>
    <dbReference type="NCBI Taxonomy" id="563178"/>
    <lineage>
        <taxon>Bacteria</taxon>
        <taxon>Pseudomonadati</taxon>
        <taxon>Pseudomonadota</taxon>
        <taxon>Gammaproteobacteria</taxon>
        <taxon>Enterobacterales</taxon>
        <taxon>Erwiniaceae</taxon>
        <taxon>Buchnera</taxon>
    </lineage>
</organism>
<evidence type="ECO:0000255" key="1">
    <source>
        <dbReference type="HAMAP-Rule" id="MF_00040"/>
    </source>
</evidence>
<protein>
    <recommendedName>
        <fullName evidence="1">Ribosome-recycling factor</fullName>
        <shortName evidence="1">RRF</shortName>
    </recommendedName>
    <alternativeName>
        <fullName evidence="1">Ribosome-releasing factor</fullName>
    </alternativeName>
</protein>
<reference key="1">
    <citation type="journal article" date="2009" name="Science">
        <title>The dynamics and time scale of ongoing genomic erosion in symbiotic bacteria.</title>
        <authorList>
            <person name="Moran N.A."/>
            <person name="McLaughlin H.J."/>
            <person name="Sorek R."/>
        </authorList>
    </citation>
    <scope>NUCLEOTIDE SEQUENCE [LARGE SCALE GENOMIC DNA]</scope>
    <source>
        <strain>5A</strain>
    </source>
</reference>
<comment type="function">
    <text evidence="1">Responsible for the release of ribosomes from messenger RNA at the termination of protein biosynthesis. May increase the efficiency of translation by recycling ribosomes from one round of translation to another.</text>
</comment>
<comment type="subcellular location">
    <subcellularLocation>
        <location evidence="1">Cytoplasm</location>
    </subcellularLocation>
</comment>
<comment type="similarity">
    <text evidence="1">Belongs to the RRF family.</text>
</comment>
<dbReference type="EMBL" id="CP001161">
    <property type="protein sequence ID" value="ACL30602.1"/>
    <property type="molecule type" value="Genomic_DNA"/>
</dbReference>
<dbReference type="RefSeq" id="WP_009874190.1">
    <property type="nucleotide sequence ID" value="NC_011833.1"/>
</dbReference>
<dbReference type="SMR" id="B8D931"/>
<dbReference type="KEGG" id="bap:BUAP5A_229"/>
<dbReference type="HOGENOM" id="CLU_073981_2_1_6"/>
<dbReference type="OrthoDB" id="9804006at2"/>
<dbReference type="Proteomes" id="UP000006904">
    <property type="component" value="Chromosome"/>
</dbReference>
<dbReference type="GO" id="GO:0005829">
    <property type="term" value="C:cytosol"/>
    <property type="evidence" value="ECO:0007669"/>
    <property type="project" value="GOC"/>
</dbReference>
<dbReference type="GO" id="GO:0043023">
    <property type="term" value="F:ribosomal large subunit binding"/>
    <property type="evidence" value="ECO:0007669"/>
    <property type="project" value="TreeGrafter"/>
</dbReference>
<dbReference type="GO" id="GO:0002184">
    <property type="term" value="P:cytoplasmic translational termination"/>
    <property type="evidence" value="ECO:0007669"/>
    <property type="project" value="TreeGrafter"/>
</dbReference>
<dbReference type="CDD" id="cd00520">
    <property type="entry name" value="RRF"/>
    <property type="match status" value="1"/>
</dbReference>
<dbReference type="FunFam" id="1.10.132.20:FF:000001">
    <property type="entry name" value="Ribosome-recycling factor"/>
    <property type="match status" value="1"/>
</dbReference>
<dbReference type="FunFam" id="3.30.1360.40:FF:000001">
    <property type="entry name" value="Ribosome-recycling factor"/>
    <property type="match status" value="1"/>
</dbReference>
<dbReference type="Gene3D" id="3.30.1360.40">
    <property type="match status" value="1"/>
</dbReference>
<dbReference type="Gene3D" id="1.10.132.20">
    <property type="entry name" value="Ribosome-recycling factor"/>
    <property type="match status" value="1"/>
</dbReference>
<dbReference type="HAMAP" id="MF_00040">
    <property type="entry name" value="RRF"/>
    <property type="match status" value="1"/>
</dbReference>
<dbReference type="InterPro" id="IPR002661">
    <property type="entry name" value="Ribosome_recyc_fac"/>
</dbReference>
<dbReference type="InterPro" id="IPR023584">
    <property type="entry name" value="Ribosome_recyc_fac_dom"/>
</dbReference>
<dbReference type="InterPro" id="IPR036191">
    <property type="entry name" value="RRF_sf"/>
</dbReference>
<dbReference type="NCBIfam" id="TIGR00496">
    <property type="entry name" value="frr"/>
    <property type="match status" value="1"/>
</dbReference>
<dbReference type="PANTHER" id="PTHR20982:SF3">
    <property type="entry name" value="MITOCHONDRIAL RIBOSOME RECYCLING FACTOR PSEUDO 1"/>
    <property type="match status" value="1"/>
</dbReference>
<dbReference type="PANTHER" id="PTHR20982">
    <property type="entry name" value="RIBOSOME RECYCLING FACTOR"/>
    <property type="match status" value="1"/>
</dbReference>
<dbReference type="Pfam" id="PF01765">
    <property type="entry name" value="RRF"/>
    <property type="match status" value="1"/>
</dbReference>
<dbReference type="SUPFAM" id="SSF55194">
    <property type="entry name" value="Ribosome recycling factor, RRF"/>
    <property type="match status" value="1"/>
</dbReference>
<keyword id="KW-0963">Cytoplasm</keyword>
<keyword id="KW-0648">Protein biosynthesis</keyword>
<accession>B8D931</accession>
<sequence>MINQIDIKTRERMEACIQTFHNNISNIKTGRASPTLLHNIYIEYFGSKTPLRQVSNIIVEDSHTLKINVFDDSITSLIRKSILNSNLDLNPVLQGKDIIIPIPRLTEERRKQLIKVIRGDAESSRIQIRNIRRDANDKVKRLLKDKIISEDNEHTSQSKIQIMTNEYIKKIDCILEKKEKELMKF</sequence>